<reference key="1">
    <citation type="journal article" date="2015" name="Org. Lett.">
        <title>Biosynthetic study on antihypercholesterolemic agent phomoidride: general biogenesis of fungal dimeric anhydrides.</title>
        <authorList>
            <person name="Fujii R."/>
            <person name="Matsu Y."/>
            <person name="Minami A."/>
            <person name="Nagamine S."/>
            <person name="Takeuchi I."/>
            <person name="Gomi K."/>
            <person name="Oikawa H."/>
        </authorList>
    </citation>
    <scope>NUCLEOTIDE SEQUENCE [GENOMIC DNA]</scope>
    <source>
        <strain>ATCC 74256</strain>
    </source>
</reference>
<reference key="2">
    <citation type="journal article" date="1997" name="J. Antibiot.">
        <title>CP-225,917 and CP-263,114, novel Ras farnesylation inhibitors from an unidentified fungus. I. Taxonomy, fermentation, isolation, and biochemical properties.</title>
        <authorList>
            <person name="Dabrah T.T."/>
            <person name="Harwood H.J. Jr."/>
            <person name="Huang L.H."/>
            <person name="Jankovich N.D."/>
            <person name="Kaneko T."/>
            <person name="Li J.C."/>
            <person name="Lindsey S."/>
            <person name="Moshier P.M."/>
            <person name="Subashi T.A."/>
            <person name="Therrien M."/>
            <person name="Watts P.C."/>
        </authorList>
    </citation>
    <scope>BIOTECHNOLOGY</scope>
</reference>
<comment type="function">
    <text evidence="4">MFS-type transporter; part of the gene cluster that mediates the biosynthesis of the antihypercholesterolemic agents phomoidrides which are dimeric anhydrides.</text>
</comment>
<comment type="subcellular location">
    <subcellularLocation>
        <location evidence="1">Membrane</location>
        <topology evidence="1">Multi-pass membrane protein</topology>
    </subcellularLocation>
</comment>
<comment type="biotechnology">
    <text evidence="5">Phomoidrides A and B (also known as CP-225,917 and CP-263,114) are potent inhibitors of Ras farnesyltransferase and squalene synthase (PubMed:9066758). CP-225,917 and CP-263,114 inhibit Ras farnesyl transferase from rat brain with IC(50) values of 6 uM and 20 uoM, respectively (PubMed:9066758). CP-225,917 inhibits squalene synthase with an IC(50) value of 43 uM and CP-263,114 with an IC(50) of 160 uM (PubMed:9066758).</text>
</comment>
<comment type="similarity">
    <text evidence="7">Belongs to the major facilitator superfamily.</text>
</comment>
<proteinExistence type="evidence at protein level"/>
<organism>
    <name type="scientific">Fungal sp. (strain ATCC 74256)</name>
    <dbReference type="NCBI Taxonomy" id="1729595"/>
    <lineage>
        <taxon>Eukaryota</taxon>
        <taxon>Fungi</taxon>
    </lineage>
</organism>
<evidence type="ECO:0000255" key="1"/>
<evidence type="ECO:0000255" key="2">
    <source>
        <dbReference type="PROSITE-ProRule" id="PRU00498"/>
    </source>
</evidence>
<evidence type="ECO:0000256" key="3">
    <source>
        <dbReference type="SAM" id="MobiDB-lite"/>
    </source>
</evidence>
<evidence type="ECO:0000269" key="4">
    <source>
    </source>
</evidence>
<evidence type="ECO:0000269" key="5">
    <source>
    </source>
</evidence>
<evidence type="ECO:0000303" key="6">
    <source>
    </source>
</evidence>
<evidence type="ECO:0000305" key="7"/>
<name>PHID_FUNX7</name>
<gene>
    <name evidence="6" type="primary">phiD</name>
</gene>
<protein>
    <recommendedName>
        <fullName evidence="6">MFS-type transporter phiD</fullName>
    </recommendedName>
    <alternativeName>
        <fullName evidence="6">Phomoidride biosynthesis cluster protein D</fullName>
    </alternativeName>
</protein>
<dbReference type="EMBL" id="LC086931">
    <property type="protein sequence ID" value="BBG28501.1"/>
    <property type="molecule type" value="Genomic_DNA"/>
</dbReference>
<dbReference type="GO" id="GO:0005886">
    <property type="term" value="C:plasma membrane"/>
    <property type="evidence" value="ECO:0007669"/>
    <property type="project" value="TreeGrafter"/>
</dbReference>
<dbReference type="GO" id="GO:0022857">
    <property type="term" value="F:transmembrane transporter activity"/>
    <property type="evidence" value="ECO:0007669"/>
    <property type="project" value="InterPro"/>
</dbReference>
<dbReference type="CDD" id="cd17323">
    <property type="entry name" value="MFS_Tpo1_MDR_like"/>
    <property type="match status" value="1"/>
</dbReference>
<dbReference type="FunFam" id="1.20.1720.10:FF:000009">
    <property type="entry name" value="MFS multidrug transporter"/>
    <property type="match status" value="1"/>
</dbReference>
<dbReference type="Gene3D" id="1.20.1250.20">
    <property type="entry name" value="MFS general substrate transporter like domains"/>
    <property type="match status" value="1"/>
</dbReference>
<dbReference type="InterPro" id="IPR011701">
    <property type="entry name" value="MFS"/>
</dbReference>
<dbReference type="InterPro" id="IPR020846">
    <property type="entry name" value="MFS_dom"/>
</dbReference>
<dbReference type="InterPro" id="IPR036259">
    <property type="entry name" value="MFS_trans_sf"/>
</dbReference>
<dbReference type="PANTHER" id="PTHR23502">
    <property type="entry name" value="MAJOR FACILITATOR SUPERFAMILY"/>
    <property type="match status" value="1"/>
</dbReference>
<dbReference type="PANTHER" id="PTHR23502:SF51">
    <property type="entry name" value="QUINIDINE RESISTANCE PROTEIN 1-RELATED"/>
    <property type="match status" value="1"/>
</dbReference>
<dbReference type="Pfam" id="PF07690">
    <property type="entry name" value="MFS_1"/>
    <property type="match status" value="1"/>
</dbReference>
<dbReference type="SUPFAM" id="SSF103473">
    <property type="entry name" value="MFS general substrate transporter"/>
    <property type="match status" value="1"/>
</dbReference>
<dbReference type="PROSITE" id="PS50850">
    <property type="entry name" value="MFS"/>
    <property type="match status" value="1"/>
</dbReference>
<feature type="chain" id="PRO_0000458952" description="MFS-type transporter phiD">
    <location>
        <begin position="1"/>
        <end position="659"/>
    </location>
</feature>
<feature type="transmembrane region" description="Helical" evidence="1">
    <location>
        <begin position="144"/>
        <end position="164"/>
    </location>
</feature>
<feature type="transmembrane region" description="Helical" evidence="1">
    <location>
        <begin position="183"/>
        <end position="203"/>
    </location>
</feature>
<feature type="transmembrane region" description="Helical" evidence="1">
    <location>
        <begin position="210"/>
        <end position="230"/>
    </location>
</feature>
<feature type="transmembrane region" description="Helical" evidence="1">
    <location>
        <begin position="235"/>
        <end position="257"/>
    </location>
</feature>
<feature type="transmembrane region" description="Helical" evidence="1">
    <location>
        <begin position="269"/>
        <end position="289"/>
    </location>
</feature>
<feature type="transmembrane region" description="Helical" evidence="1">
    <location>
        <begin position="299"/>
        <end position="319"/>
    </location>
</feature>
<feature type="transmembrane region" description="Helical" evidence="1">
    <location>
        <begin position="385"/>
        <end position="405"/>
    </location>
</feature>
<feature type="transmembrane region" description="Helical" evidence="1">
    <location>
        <begin position="422"/>
        <end position="442"/>
    </location>
</feature>
<feature type="transmembrane region" description="Helical" evidence="1">
    <location>
        <begin position="475"/>
        <end position="495"/>
    </location>
</feature>
<feature type="transmembrane region" description="Helical" evidence="1">
    <location>
        <begin position="502"/>
        <end position="522"/>
    </location>
</feature>
<feature type="transmembrane region" description="Helical" evidence="1">
    <location>
        <begin position="549"/>
        <end position="569"/>
    </location>
</feature>
<feature type="transmembrane region" description="Helical" evidence="1">
    <location>
        <begin position="572"/>
        <end position="592"/>
    </location>
</feature>
<feature type="region of interest" description="Disordered" evidence="3">
    <location>
        <begin position="1"/>
        <end position="42"/>
    </location>
</feature>
<feature type="region of interest" description="Disordered" evidence="3">
    <location>
        <begin position="76"/>
        <end position="127"/>
    </location>
</feature>
<feature type="region of interest" description="Disordered" evidence="3">
    <location>
        <begin position="605"/>
        <end position="659"/>
    </location>
</feature>
<feature type="compositionally biased region" description="Basic and acidic residues" evidence="3">
    <location>
        <begin position="93"/>
        <end position="109"/>
    </location>
</feature>
<feature type="compositionally biased region" description="Basic and acidic residues" evidence="3">
    <location>
        <begin position="605"/>
        <end position="634"/>
    </location>
</feature>
<feature type="compositionally biased region" description="Basic and acidic residues" evidence="3">
    <location>
        <begin position="641"/>
        <end position="651"/>
    </location>
</feature>
<feature type="glycosylation site" description="N-linked (GlcNAc...) asparagine" evidence="2">
    <location>
        <position position="182"/>
    </location>
</feature>
<feature type="glycosylation site" description="N-linked (GlcNAc...) asparagine" evidence="2">
    <location>
        <position position="338"/>
    </location>
</feature>
<sequence>MGEDVRRIASQSRPRPSTWAVSRPRPASWRNSRGARPESWRVSRQSFREWIEHWEFEHENRDQILELGHELEHVPDLTVDVTPPATSDGPADSIEKSKEDGDADDKRQSASDSTVKGKAKAVDIGKQQTRDAPYSVHSVGRRRLIVLAASLAGFFSPLSASIYYPALPVIAHNFHVSNSQINLTVTTYLIIQGIAPMITAGFSDTAGRRPAYAICFIVYLAANLGLALQNDYAALMVLRCLQSAGSSGAIALANGVVSDIVTPQERGSFIAFASLGSILGPTLSPVIGGLITQYLDWHWIFWFLLIFTGTFCVPFFLFFPETCRKVVGDGSIVPPPINRSLTDYLRKRKRVKSGTEANQPATKRQKMVIPNPLSTLQVFAVKQTAMILIPSGIAFGTFYAVLTGASNTFKVIYGFNQLKVSLMYIPLGVGGIASALSTGKLVDRNFRRHAEKLGITVTRNKRQDLSDFPLERARLEVGLPLFYLGTACLVIYGWILEKQYSVWGPIILMLVMSWTLAAFFQVMNVLLVDTYPGRGATVTAAVNLVRCELGAAAAAVISPMTDGVGEGWAYTIVAMIGFATTPLLLFTAVNGIRWRREAAEKEKIKKAGREAKIEAEKRAREEIETKKEAKQKAEEDVEIGDLEKQDRKDSQRPTSSKAT</sequence>
<accession>A0A348HAX9</accession>
<keyword id="KW-0325">Glycoprotein</keyword>
<keyword id="KW-0472">Membrane</keyword>
<keyword id="KW-0812">Transmembrane</keyword>
<keyword id="KW-1133">Transmembrane helix</keyword>
<keyword id="KW-0813">Transport</keyword>